<gene>
    <name type="primary">RCF1</name>
    <name type="synonym">AIM31</name>
    <name type="ORF">HCAG_06251</name>
</gene>
<evidence type="ECO:0000250" key="1"/>
<evidence type="ECO:0000255" key="2"/>
<evidence type="ECO:0000255" key="3">
    <source>
        <dbReference type="PROSITE-ProRule" id="PRU00836"/>
    </source>
</evidence>
<evidence type="ECO:0000305" key="4"/>
<reference key="1">
    <citation type="journal article" date="2009" name="Genome Res.">
        <title>Comparative genomic analyses of the human fungal pathogens Coccidioides and their relatives.</title>
        <authorList>
            <person name="Sharpton T.J."/>
            <person name="Stajich J.E."/>
            <person name="Rounsley S.D."/>
            <person name="Gardner M.J."/>
            <person name="Wortman J.R."/>
            <person name="Jordar V.S."/>
            <person name="Maiti R."/>
            <person name="Kodira C.D."/>
            <person name="Neafsey D.E."/>
            <person name="Zeng Q."/>
            <person name="Hung C.-Y."/>
            <person name="McMahan C."/>
            <person name="Muszewska A."/>
            <person name="Grynberg M."/>
            <person name="Mandel M.A."/>
            <person name="Kellner E.M."/>
            <person name="Barker B.M."/>
            <person name="Galgiani J.N."/>
            <person name="Orbach M.J."/>
            <person name="Kirkland T.N."/>
            <person name="Cole G.T."/>
            <person name="Henn M.R."/>
            <person name="Birren B.W."/>
            <person name="Taylor J.W."/>
        </authorList>
    </citation>
    <scope>NUCLEOTIDE SEQUENCE [LARGE SCALE GENOMIC DNA]</scope>
    <source>
        <strain>NAm1 / WU24</strain>
    </source>
</reference>
<proteinExistence type="inferred from homology"/>
<dbReference type="EMBL" id="CH476661">
    <property type="protein sequence ID" value="EDN10448.1"/>
    <property type="molecule type" value="Genomic_DNA"/>
</dbReference>
<dbReference type="SMR" id="A6RBB3"/>
<dbReference type="STRING" id="339724.A6RBB3"/>
<dbReference type="KEGG" id="aje:HCAG_06251"/>
<dbReference type="VEuPathDB" id="FungiDB:HCAG_06251"/>
<dbReference type="HOGENOM" id="CLU_087356_0_2_1"/>
<dbReference type="OMA" id="QRWIREL"/>
<dbReference type="OrthoDB" id="4926at299071"/>
<dbReference type="Proteomes" id="UP000009297">
    <property type="component" value="Unassembled WGS sequence"/>
</dbReference>
<dbReference type="GO" id="GO:0031966">
    <property type="term" value="C:mitochondrial membrane"/>
    <property type="evidence" value="ECO:0007669"/>
    <property type="project" value="UniProtKB-SubCell"/>
</dbReference>
<dbReference type="GO" id="GO:0097250">
    <property type="term" value="P:mitochondrial respirasome assembly"/>
    <property type="evidence" value="ECO:0007669"/>
    <property type="project" value="TreeGrafter"/>
</dbReference>
<dbReference type="InterPro" id="IPR007667">
    <property type="entry name" value="Hypoxia_induced_domain"/>
</dbReference>
<dbReference type="InterPro" id="IPR050355">
    <property type="entry name" value="RCF1"/>
</dbReference>
<dbReference type="PANTHER" id="PTHR12297:SF3">
    <property type="entry name" value="HIG1 DOMAIN FAMILY MEMBER 1A"/>
    <property type="match status" value="1"/>
</dbReference>
<dbReference type="PANTHER" id="PTHR12297">
    <property type="entry name" value="HYPOXIA-INDUCBILE GENE 1 HIG1 -RELATED"/>
    <property type="match status" value="1"/>
</dbReference>
<dbReference type="Pfam" id="PF04588">
    <property type="entry name" value="HIG_1_N"/>
    <property type="match status" value="1"/>
</dbReference>
<dbReference type="PROSITE" id="PS51503">
    <property type="entry name" value="HIG1"/>
    <property type="match status" value="1"/>
</dbReference>
<comment type="function">
    <text evidence="1">Cytochrome c oxidase subunit which plays a role in assembly of respiratory supercomplexes.</text>
</comment>
<comment type="subunit">
    <text evidence="1">Associates with the respiratory chain complex III/complex IV supercomplex.</text>
</comment>
<comment type="subcellular location">
    <subcellularLocation>
        <location evidence="3">Mitochondrion membrane</location>
        <topology evidence="3">Multi-pass membrane protein</topology>
    </subcellularLocation>
</comment>
<comment type="similarity">
    <text evidence="4">Belongs to the RCF1 family.</text>
</comment>
<organism>
    <name type="scientific">Ajellomyces capsulatus (strain NAm1 / WU24)</name>
    <name type="common">Darling's disease fungus</name>
    <name type="synonym">Histoplasma capsulatum</name>
    <dbReference type="NCBI Taxonomy" id="2059318"/>
    <lineage>
        <taxon>Eukaryota</taxon>
        <taxon>Fungi</taxon>
        <taxon>Dikarya</taxon>
        <taxon>Ascomycota</taxon>
        <taxon>Pezizomycotina</taxon>
        <taxon>Eurotiomycetes</taxon>
        <taxon>Eurotiomycetidae</taxon>
        <taxon>Onygenales</taxon>
        <taxon>Ajellomycetaceae</taxon>
        <taxon>Histoplasma</taxon>
    </lineage>
</organism>
<accession>A6RBB3</accession>
<protein>
    <recommendedName>
        <fullName>Respiratory supercomplex factor 1, mitochondrial</fullName>
    </recommendedName>
</protein>
<sequence>MSNTPLPSSFDAHPEFFQETKWQKFTRRIKEEPLIPIGYAATSYALWRAYKSMKAGDSIELNRMFRARIYGHAFTLFAIVAGGIYYGQERRQRKEFEKALQQKQDQEKRDAWLKELEIRDKEDKNWRQRHAAIEMAAKEAEKKRG</sequence>
<name>RCF1_AJECN</name>
<keyword id="KW-0175">Coiled coil</keyword>
<keyword id="KW-0472">Membrane</keyword>
<keyword id="KW-0496">Mitochondrion</keyword>
<keyword id="KW-1185">Reference proteome</keyword>
<keyword id="KW-0812">Transmembrane</keyword>
<keyword id="KW-1133">Transmembrane helix</keyword>
<feature type="chain" id="PRO_0000399611" description="Respiratory supercomplex factor 1, mitochondrial">
    <location>
        <begin position="1"/>
        <end position="145"/>
    </location>
</feature>
<feature type="transmembrane region" description="Helical" evidence="3">
    <location>
        <begin position="33"/>
        <end position="50"/>
    </location>
</feature>
<feature type="transmembrane region" description="Helical" evidence="3">
    <location>
        <begin position="69"/>
        <end position="86"/>
    </location>
</feature>
<feature type="domain" description="HIG1" evidence="3">
    <location>
        <begin position="6"/>
        <end position="97"/>
    </location>
</feature>
<feature type="coiled-coil region" evidence="2">
    <location>
        <begin position="86"/>
        <end position="144"/>
    </location>
</feature>